<geneLocation type="plasmid">
    <name>pIB1</name>
</geneLocation>
<geneLocation type="plasmid">
    <name>pYV</name>
</geneLocation>
<organism>
    <name type="scientific">Yersinia pseudotuberculosis serotype I (strain IP32953)</name>
    <dbReference type="NCBI Taxonomy" id="273123"/>
    <lineage>
        <taxon>Bacteria</taxon>
        <taxon>Pseudomonadati</taxon>
        <taxon>Pseudomonadota</taxon>
        <taxon>Gammaproteobacteria</taxon>
        <taxon>Enterobacterales</taxon>
        <taxon>Yersiniaceae</taxon>
        <taxon>Yersinia</taxon>
    </lineage>
</organism>
<proteinExistence type="evidence at transcript level"/>
<gene>
    <name type="primary">yscI</name>
    <name type="synonym">lcrO</name>
    <name type="ordered locus">pYV0085</name>
</gene>
<comment type="function">
    <text>Belongs to an operon involved in the translocation of Yop proteins across the bacterial membranes or in the specific control of this function.</text>
</comment>
<comment type="induction">
    <text>At 37 degrees Celsius in the absence of calcium.</text>
</comment>
<comment type="similarity">
    <text evidence="1">Belongs to the YscI/HrpB family.</text>
</comment>
<feature type="chain" id="PRO_0000066488" description="Yop proteins translocation protein I">
    <location>
        <begin position="1"/>
        <end position="115"/>
    </location>
</feature>
<name>YSCI_YERPS</name>
<keyword id="KW-0614">Plasmid</keyword>
<keyword id="KW-0843">Virulence</keyword>
<reference key="1">
    <citation type="journal article" date="1992" name="J. Bacteriol.">
        <title>A novel protein, LcrQ, involved in the low-calcium response of Yersinia pseudotuberculosis shows extensive homology to YopH.</title>
        <authorList>
            <person name="Rimpilaeinen M."/>
            <person name="Forsberg A."/>
            <person name="Wolf-Watz H."/>
        </authorList>
    </citation>
    <scope>NUCLEOTIDE SEQUENCE [GENOMIC DNA]</scope>
    <source>
        <strain>YPIII / Serotype O:3</strain>
        <plasmid>pIB1</plasmid>
    </source>
</reference>
<reference key="2">
    <citation type="journal article" date="2004" name="Proc. Natl. Acad. Sci. U.S.A.">
        <title>Insights into the evolution of Yersinia pestis through whole-genome comparison with Yersinia pseudotuberculosis.</title>
        <authorList>
            <person name="Chain P.S.G."/>
            <person name="Carniel E."/>
            <person name="Larimer F.W."/>
            <person name="Lamerdin J."/>
            <person name="Stoutland P.O."/>
            <person name="Regala W.M."/>
            <person name="Georgescu A.M."/>
            <person name="Vergez L.M."/>
            <person name="Land M.L."/>
            <person name="Motin V.L."/>
            <person name="Brubaker R.R."/>
            <person name="Fowler J."/>
            <person name="Hinnebusch J."/>
            <person name="Marceau M."/>
            <person name="Medigue C."/>
            <person name="Simonet M."/>
            <person name="Chenal-Francisque V."/>
            <person name="Souza B."/>
            <person name="Dacheux D."/>
            <person name="Elliott J.M."/>
            <person name="Derbise A."/>
            <person name="Hauser L.J."/>
            <person name="Garcia E."/>
        </authorList>
    </citation>
    <scope>NUCLEOTIDE SEQUENCE [LARGE SCALE GENOMIC DNA]</scope>
    <source>
        <strain>IP32953</strain>
        <plasmid>pYV</plasmid>
    </source>
</reference>
<accession>P69971</accession>
<accession>Q00933</accession>
<accession>Q663I1</accession>
<dbReference type="EMBL" id="M83986">
    <property type="protein sequence ID" value="AAA27650.1"/>
    <property type="molecule type" value="Genomic_DNA"/>
</dbReference>
<dbReference type="EMBL" id="BX936399">
    <property type="protein sequence ID" value="CAF25428.1"/>
    <property type="molecule type" value="Genomic_DNA"/>
</dbReference>
<dbReference type="RefSeq" id="WP_002212914.1">
    <property type="nucleotide sequence ID" value="NZ_CP009711.1"/>
</dbReference>
<dbReference type="SMR" id="P69971"/>
<dbReference type="KEGG" id="ypo:BZ17_4250"/>
<dbReference type="KEGG" id="yps:pYV0085"/>
<dbReference type="PATRIC" id="fig|273123.14.peg.4485"/>
<dbReference type="Proteomes" id="UP000001011">
    <property type="component" value="Plasmid pYV"/>
</dbReference>
<dbReference type="GO" id="GO:0030254">
    <property type="term" value="P:protein secretion by the type III secretion system"/>
    <property type="evidence" value="ECO:0007669"/>
    <property type="project" value="InterPro"/>
</dbReference>
<dbReference type="InterPro" id="IPR012670">
    <property type="entry name" value="T3SS_YscI/HrpB"/>
</dbReference>
<dbReference type="NCBIfam" id="TIGR02497">
    <property type="entry name" value="yscI_hrpB_dom"/>
    <property type="match status" value="1"/>
</dbReference>
<dbReference type="Pfam" id="PF17001">
    <property type="entry name" value="T3SS_basalb_I"/>
    <property type="match status" value="1"/>
</dbReference>
<sequence length="115" mass="12669">MPNIEIAQADEVIITTLEELGPAEPTTDQIMRFDAAMSEDTQGLGHSLLKEVSDIQKSFKTVKSDLHTKLAVSVDNPNDLMLMQWSLIRITIQEELIAKTAGRMSQNVETLSKGG</sequence>
<protein>
    <recommendedName>
        <fullName>Yop proteins translocation protein I</fullName>
    </recommendedName>
    <alternativeName>
        <fullName>Low calcium response locus protein O</fullName>
    </alternativeName>
</protein>
<evidence type="ECO:0000305" key="1"/>